<organismHost>
    <name type="scientific">Bos taurus</name>
    <name type="common">Bovine</name>
    <dbReference type="NCBI Taxonomy" id="9913"/>
</organismHost>
<organism>
    <name type="scientific">Bovine leukemia virus (isolate Japanese BLV-1)</name>
    <name type="common">BLV</name>
    <dbReference type="NCBI Taxonomy" id="11907"/>
    <lineage>
        <taxon>Viruses</taxon>
        <taxon>Riboviria</taxon>
        <taxon>Pararnavirae</taxon>
        <taxon>Artverviricota</taxon>
        <taxon>Revtraviricetes</taxon>
        <taxon>Ortervirales</taxon>
        <taxon>Retroviridae</taxon>
        <taxon>Orthoretrovirinae</taxon>
        <taxon>Deltaretrovirus</taxon>
        <taxon>Bovine leukemia virus</taxon>
    </lineage>
</organism>
<gene>
    <name type="primary">env</name>
</gene>
<accession>P03380</accession>
<feature type="signal peptide" evidence="2">
    <location>
        <begin position="1"/>
        <end position="33"/>
    </location>
</feature>
<feature type="chain" id="PRO_0000239557" description="Envelope glycoprotein">
    <location>
        <begin position="34"/>
        <end position="515"/>
    </location>
</feature>
<feature type="chain" id="PRO_0000040701" description="Surface protein" evidence="1">
    <location>
        <begin position="34"/>
        <end position="301"/>
    </location>
</feature>
<feature type="chain" id="PRO_0000040702" description="Transmembrane protein" evidence="1">
    <location>
        <begin position="302"/>
        <end position="515"/>
    </location>
</feature>
<feature type="topological domain" description="Extracellular" evidence="2">
    <location>
        <begin position="34"/>
        <end position="435"/>
    </location>
</feature>
<feature type="transmembrane region" description="Helical" evidence="2">
    <location>
        <begin position="436"/>
        <end position="456"/>
    </location>
</feature>
<feature type="topological domain" description="Cytoplasmic" evidence="2">
    <location>
        <begin position="457"/>
        <end position="515"/>
    </location>
</feature>
<feature type="region of interest" description="Fusion peptide" evidence="2">
    <location>
        <begin position="304"/>
        <end position="324"/>
    </location>
</feature>
<feature type="region of interest" description="Immunosuppression" evidence="1">
    <location>
        <begin position="365"/>
        <end position="381"/>
    </location>
</feature>
<feature type="coiled-coil region" evidence="2">
    <location>
        <begin position="330"/>
        <end position="376"/>
    </location>
</feature>
<feature type="coiled-coil region" evidence="2">
    <location>
        <begin position="388"/>
        <end position="420"/>
    </location>
</feature>
<feature type="short sequence motif" description="CXXC">
    <location>
        <begin position="212"/>
        <end position="215"/>
    </location>
</feature>
<feature type="short sequence motif" description="CX6CC">
    <location>
        <begin position="384"/>
        <end position="392"/>
    </location>
</feature>
<feature type="site" description="Cleavage; by host" evidence="1">
    <location>
        <begin position="301"/>
        <end position="302"/>
    </location>
</feature>
<feature type="lipid moiety-binding region" description="S-palmitoyl cysteine; by host" evidence="1">
    <location>
        <position position="455"/>
    </location>
</feature>
<feature type="glycosylation site" description="N-linked (GlcNAc...) asparagine; by host" evidence="2">
    <location>
        <position position="129"/>
    </location>
</feature>
<feature type="glycosylation site" description="N-linked (GlcNAc...) asparagine; by host" evidence="2">
    <location>
        <position position="203"/>
    </location>
</feature>
<feature type="glycosylation site" description="N-linked (GlcNAc...) asparagine; by host" evidence="2">
    <location>
        <position position="230"/>
    </location>
</feature>
<feature type="glycosylation site" description="N-linked (GlcNAc...) asparagine; by host" evidence="2">
    <location>
        <position position="251"/>
    </location>
</feature>
<feature type="glycosylation site" description="N-linked (GlcNAc...) asparagine; by host" evidence="2">
    <location>
        <position position="256"/>
    </location>
</feature>
<feature type="glycosylation site" description="N-linked (GlcNAc...) asparagine; by host" evidence="2">
    <location>
        <position position="271"/>
    </location>
</feature>
<feature type="glycosylation site" description="N-linked (GlcNAc...) asparagine; by host" evidence="2">
    <location>
        <position position="287"/>
    </location>
</feature>
<feature type="glycosylation site" description="N-linked (GlcNAc...) asparagine; by host" evidence="2">
    <location>
        <position position="351"/>
    </location>
</feature>
<feature type="glycosylation site" description="N-linked (GlcNAc...) asparagine; by host" evidence="2">
    <location>
        <position position="398"/>
    </location>
</feature>
<feature type="disulfide bond" description="Interchain (between SU and TM chains, or C-215 with C-392); in linked form" evidence="1">
    <location>
        <begin position="212"/>
        <end position="392"/>
    </location>
</feature>
<feature type="disulfide bond" evidence="1">
    <location>
        <begin position="212"/>
        <end position="215"/>
    </location>
</feature>
<feature type="disulfide bond" evidence="1">
    <location>
        <begin position="384"/>
        <end position="391"/>
    </location>
</feature>
<feature type="sequence conflict" description="In Ref. 2; AA sequence." evidence="3" ref="2">
    <original>L</original>
    <variation>S</variation>
    <location>
        <position position="311"/>
    </location>
</feature>
<name>ENV_BLVJ</name>
<sequence length="515" mass="58472">MPKERRSRRRPQPIIRWVSLTLTLLALCRPIQTWRCSLSLGNQQWMTAYNQEAKFSISIDQILEAHNQSPFCAKSPRYTLDSVNGYPKIYWPPPQGRRRFGARAMVTYDCEPRCPYVGADRFDCPHWDNASQADQGSFYVNHQILFLHLKQCHGIFTLTWEIWGYDPLITFSLHKIPDPPQPDFPQLNSDWVPSVRSWALLLNQTARAFPDCAICWEPSPPWAPEILVYNKTISSSGPGLALPDAQIFWVNSSSFNTTQGWHHPSQRLLFNVSQGNALLLPPISLVNLSTASSAPPTRVRRSPVAALTLGLALSVGLTGINVAVSALSHQRLTSLIHVLEQDQQRLITAINQTHYNLLNVASVVAQNRRGLDWLYIRLGFQSLCPTINEPCCFLRIQNDSIILRGDLQPLSQRVSTDWQWPWNWDLGLTAWVRETIHSVLSLFLLALFLLFLAPCLIKCLTSRLLKLLRQAPHFPEISLTPKPDSDYQALLPSAPEIYSHLSPVKPDYINLRPCP</sequence>
<protein>
    <recommendedName>
        <fullName>Envelope glycoprotein</fullName>
    </recommendedName>
    <alternativeName>
        <fullName>Env polyprotein</fullName>
    </alternativeName>
    <component>
        <recommendedName>
            <fullName>Surface protein</fullName>
            <shortName>SU</shortName>
        </recommendedName>
        <alternativeName>
            <fullName>Glycoprotein 51</fullName>
            <shortName>gp51</shortName>
        </alternativeName>
    </component>
    <component>
        <recommendedName>
            <fullName>Transmembrane protein</fullName>
            <shortName>TM</shortName>
        </recommendedName>
        <alternativeName>
            <fullName>Glycoprotein 30</fullName>
            <shortName>gp30</shortName>
        </alternativeName>
    </component>
</protein>
<dbReference type="EMBL" id="K02120">
    <property type="protein sequence ID" value="AAA42786.1"/>
    <property type="molecule type" value="Genomic_RNA"/>
</dbReference>
<dbReference type="EMBL" id="M10987">
    <property type="protein sequence ID" value="AAA42796.1"/>
    <property type="molecule type" value="Genomic_RNA"/>
</dbReference>
<dbReference type="PIR" id="B94063">
    <property type="entry name" value="VCLJB"/>
</dbReference>
<dbReference type="SMR" id="P03380"/>
<dbReference type="ChEMBL" id="CHEMBL5828"/>
<dbReference type="GlyCosmos" id="P03380">
    <property type="glycosylation" value="9 sites, No reported glycans"/>
</dbReference>
<dbReference type="GO" id="GO:0020002">
    <property type="term" value="C:host cell plasma membrane"/>
    <property type="evidence" value="ECO:0007669"/>
    <property type="project" value="UniProtKB-SubCell"/>
</dbReference>
<dbReference type="GO" id="GO:0016020">
    <property type="term" value="C:membrane"/>
    <property type="evidence" value="ECO:0007669"/>
    <property type="project" value="UniProtKB-KW"/>
</dbReference>
<dbReference type="GO" id="GO:0019031">
    <property type="term" value="C:viral envelope"/>
    <property type="evidence" value="ECO:0007669"/>
    <property type="project" value="UniProtKB-KW"/>
</dbReference>
<dbReference type="GO" id="GO:0055036">
    <property type="term" value="C:virion membrane"/>
    <property type="evidence" value="ECO:0007669"/>
    <property type="project" value="UniProtKB-SubCell"/>
</dbReference>
<dbReference type="GO" id="GO:0019064">
    <property type="term" value="P:fusion of virus membrane with host plasma membrane"/>
    <property type="evidence" value="ECO:0007669"/>
    <property type="project" value="UniProtKB-KW"/>
</dbReference>
<dbReference type="GO" id="GO:0046718">
    <property type="term" value="P:symbiont entry into host cell"/>
    <property type="evidence" value="ECO:0007669"/>
    <property type="project" value="UniProtKB-KW"/>
</dbReference>
<dbReference type="GO" id="GO:0019062">
    <property type="term" value="P:virion attachment to host cell"/>
    <property type="evidence" value="ECO:0007669"/>
    <property type="project" value="UniProtKB-KW"/>
</dbReference>
<dbReference type="Gene3D" id="1.10.287.210">
    <property type="match status" value="1"/>
</dbReference>
<dbReference type="InterPro" id="IPR018154">
    <property type="entry name" value="TLV/ENV_coat_polyprotein"/>
</dbReference>
<dbReference type="PANTHER" id="PTHR10424:SF81">
    <property type="entry name" value="ERVV2 PROTEIN"/>
    <property type="match status" value="1"/>
</dbReference>
<dbReference type="PANTHER" id="PTHR10424">
    <property type="entry name" value="VIRAL ENVELOPE PROTEIN"/>
    <property type="match status" value="1"/>
</dbReference>
<dbReference type="Pfam" id="PF00429">
    <property type="entry name" value="TLV_coat"/>
    <property type="match status" value="1"/>
</dbReference>
<dbReference type="SUPFAM" id="SSF58069">
    <property type="entry name" value="Virus ectodomain"/>
    <property type="match status" value="1"/>
</dbReference>
<comment type="function">
    <text evidence="1">The surface protein (SU) attaches the virus to the host cell by binding to its receptor. This interaction triggers the refolding of the transmembrane protein (TM) and is thought to activate its fusogenic potential by unmasking its fusion peptide. Fusion occurs at the host cell plasma membrane (By similarity).</text>
</comment>
<comment type="function">
    <text evidence="1">The transmembrane protein (TM) acts as a class I viral fusion protein. Under the current model, the protein has at least 3 conformational states: pre-fusion native state, pre-hairpin intermediate state, and post-fusion hairpin state. During viral and target cell membrane fusion, the coiled coil regions (heptad repeats) assume a trimer-of-hairpins structure, positioning the fusion peptide in close proximity to the C-terminal region of the ectodomain. The formation of this structure appears to drive apposition and subsequent fusion of viral and target cell membranes. Membranes fusion leads to delivery of the nucleocapsid into the cytoplasm (By similarity).</text>
</comment>
<comment type="subunit">
    <text evidence="1">The mature envelope protein (Env) consists of a trimer of SU-TM heterodimers attached by a labile interchain disulfide bond.</text>
</comment>
<comment type="subcellular location">
    <molecule>Transmembrane protein</molecule>
    <subcellularLocation>
        <location evidence="1">Virion membrane</location>
        <topology evidence="1">Single-pass type I membrane protein</topology>
    </subcellularLocation>
    <subcellularLocation>
        <location evidence="1">Host cell membrane</location>
        <topology evidence="1">Single-pass type I membrane protein</topology>
    </subcellularLocation>
    <text evidence="1">It is probably concentrated at the site of budding and incorporated into the virions possibly by contacts between the cytoplasmic tail of Env and the N-terminus of Gag.</text>
</comment>
<comment type="subcellular location">
    <molecule>Surface protein</molecule>
    <subcellularLocation>
        <location evidence="1">Virion membrane</location>
        <topology evidence="1">Peripheral membrane protein</topology>
    </subcellularLocation>
    <subcellularLocation>
        <location evidence="1">Host cell membrane</location>
        <topology evidence="1">Peripheral membrane protein</topology>
    </subcellularLocation>
    <text evidence="1">The surface protein is not anchored to the viral envelope, but associates with the extravirion surface through its binding to TM. It is probably concentrated at the site of budding and incorporated into the virions possibly by contacts between the cytoplasmic tail of Env and the N-terminus of Gag (By similarity).</text>
</comment>
<comment type="domain">
    <text evidence="1">The 17 amino acids long immunosuppressive region is present in many retroviral envelope proteins. Synthetic peptides derived from this relatively conserved sequence inhibit immune function in vitro and in vivo (By similarity).</text>
</comment>
<comment type="PTM">
    <text evidence="1">Specific enzymatic cleavages in vivo yield mature proteins. Envelope glycoproteins are synthesized as an inactive precursor that is N-glycosylated and processed likely by host cell furin or by a furin-like protease in the Golgi to yield the mature SU and TM proteins. The cleavage site between SU and TM requires the minimal sequence [KR]-X-[KR]-R (By similarity).</text>
</comment>
<comment type="PTM">
    <text evidence="1">The CXXC motif is highly conserved across a broad range of retroviral envelope proteins. It is thought to participate in the formation of a labile disulfide bond possibly with the CX6CC motif present in the transmembrane protein. Isomerization of the intersubunit disulfide bond to an SU intrachain disulfide bond is thought to occur upon receptor recognition in order to allow membrane fusion (By similarity).</text>
</comment>
<comment type="PTM">
    <text evidence="1">The transmembrane protein is palmitoylated.</text>
</comment>
<proteinExistence type="evidence at protein level"/>
<reference key="1">
    <citation type="journal article" date="1985" name="Proc. Natl. Acad. Sci. U.S.A.">
        <title>Complete nucleotide sequence of the genome of bovine leukemia virus: its evolutionary relationship to other retroviruses.</title>
        <authorList>
            <person name="Sagata N."/>
            <person name="Yasunaga T."/>
            <person name="Tsuzuku-Kawamura J."/>
            <person name="Ohishi K."/>
            <person name="Ogawa Y."/>
            <person name="Ikawa Y."/>
        </authorList>
    </citation>
    <scope>NUCLEOTIDE SEQUENCE [GENOMIC RNA]</scope>
</reference>
<reference key="2">
    <citation type="journal article" date="1984" name="Virology">
        <title>The envelope proteins of bovine leukemia virus: purification and sequence analysis.</title>
        <authorList>
            <person name="Schultz A.M."/>
            <person name="Copeland T.D."/>
            <person name="Oroszlan S."/>
        </authorList>
    </citation>
    <scope>PROTEIN SEQUENCE OF 34-71 AND 302-313</scope>
</reference>
<reference key="3">
    <citation type="journal article" date="1985" name="Virology">
        <title>The gag and pol genes of bovine leukemia virus: nucleotide sequence and analysis.</title>
        <authorList>
            <person name="Rice N.R."/>
            <person name="Stephens R.M."/>
            <person name="Burny A."/>
            <person name="Gilden R.V."/>
        </authorList>
    </citation>
    <scope>NUCLEOTIDE SEQUENCE [GENOMIC RNA] OF 1-22</scope>
</reference>
<keyword id="KW-0165">Cleavage on pair of basic residues</keyword>
<keyword id="KW-0175">Coiled coil</keyword>
<keyword id="KW-0903">Direct protein sequencing</keyword>
<keyword id="KW-1015">Disulfide bond</keyword>
<keyword id="KW-1169">Fusion of virus membrane with host cell membrane</keyword>
<keyword id="KW-1168">Fusion of virus membrane with host membrane</keyword>
<keyword id="KW-0325">Glycoprotein</keyword>
<keyword id="KW-1032">Host cell membrane</keyword>
<keyword id="KW-1043">Host membrane</keyword>
<keyword id="KW-0945">Host-virus interaction</keyword>
<keyword id="KW-0449">Lipoprotein</keyword>
<keyword id="KW-0472">Membrane</keyword>
<keyword id="KW-0564">Palmitate</keyword>
<keyword id="KW-0732">Signal</keyword>
<keyword id="KW-0812">Transmembrane</keyword>
<keyword id="KW-1133">Transmembrane helix</keyword>
<keyword id="KW-1161">Viral attachment to host cell</keyword>
<keyword id="KW-0261">Viral envelope protein</keyword>
<keyword id="KW-1162">Viral penetration into host cytoplasm</keyword>
<keyword id="KW-0946">Virion</keyword>
<keyword id="KW-1160">Virus entry into host cell</keyword>
<evidence type="ECO:0000250" key="1"/>
<evidence type="ECO:0000255" key="2"/>
<evidence type="ECO:0000305" key="3"/>